<reference key="1">
    <citation type="journal article" date="1997" name="Nature">
        <title>The nucleotide sequence of Saccharomyces cerevisiae chromosome XV.</title>
        <authorList>
            <person name="Dujon B."/>
            <person name="Albermann K."/>
            <person name="Aldea M."/>
            <person name="Alexandraki D."/>
            <person name="Ansorge W."/>
            <person name="Arino J."/>
            <person name="Benes V."/>
            <person name="Bohn C."/>
            <person name="Bolotin-Fukuhara M."/>
            <person name="Bordonne R."/>
            <person name="Boyer J."/>
            <person name="Camasses A."/>
            <person name="Casamayor A."/>
            <person name="Casas C."/>
            <person name="Cheret G."/>
            <person name="Cziepluch C."/>
            <person name="Daignan-Fornier B."/>
            <person name="Dang V.-D."/>
            <person name="de Haan M."/>
            <person name="Delius H."/>
            <person name="Durand P."/>
            <person name="Fairhead C."/>
            <person name="Feldmann H."/>
            <person name="Gaillon L."/>
            <person name="Galisson F."/>
            <person name="Gamo F.-J."/>
            <person name="Gancedo C."/>
            <person name="Goffeau A."/>
            <person name="Goulding S.E."/>
            <person name="Grivell L.A."/>
            <person name="Habbig B."/>
            <person name="Hand N.J."/>
            <person name="Hani J."/>
            <person name="Hattenhorst U."/>
            <person name="Hebling U."/>
            <person name="Hernando Y."/>
            <person name="Herrero E."/>
            <person name="Heumann K."/>
            <person name="Hiesel R."/>
            <person name="Hilger F."/>
            <person name="Hofmann B."/>
            <person name="Hollenberg C.P."/>
            <person name="Hughes B."/>
            <person name="Jauniaux J.-C."/>
            <person name="Kalogeropoulos A."/>
            <person name="Katsoulou C."/>
            <person name="Kordes E."/>
            <person name="Lafuente M.J."/>
            <person name="Landt O."/>
            <person name="Louis E.J."/>
            <person name="Maarse A.C."/>
            <person name="Madania A."/>
            <person name="Mannhaupt G."/>
            <person name="Marck C."/>
            <person name="Martin R.P."/>
            <person name="Mewes H.-W."/>
            <person name="Michaux G."/>
            <person name="Paces V."/>
            <person name="Parle-McDermott A.G."/>
            <person name="Pearson B.M."/>
            <person name="Perrin A."/>
            <person name="Pettersson B."/>
            <person name="Poch O."/>
            <person name="Pohl T.M."/>
            <person name="Poirey R."/>
            <person name="Portetelle D."/>
            <person name="Pujol A."/>
            <person name="Purnelle B."/>
            <person name="Ramezani Rad M."/>
            <person name="Rechmann S."/>
            <person name="Schwager C."/>
            <person name="Schweizer M."/>
            <person name="Sor F."/>
            <person name="Sterky F."/>
            <person name="Tarassov I.A."/>
            <person name="Teodoru C."/>
            <person name="Tettelin H."/>
            <person name="Thierry A."/>
            <person name="Tobiasch E."/>
            <person name="Tzermia M."/>
            <person name="Uhlen M."/>
            <person name="Unseld M."/>
            <person name="Valens M."/>
            <person name="Vandenbol M."/>
            <person name="Vetter I."/>
            <person name="Vlcek C."/>
            <person name="Voet M."/>
            <person name="Volckaert G."/>
            <person name="Voss H."/>
            <person name="Wambutt R."/>
            <person name="Wedler H."/>
            <person name="Wiemann S."/>
            <person name="Winsor B."/>
            <person name="Wolfe K.H."/>
            <person name="Zollner A."/>
            <person name="Zumstein E."/>
            <person name="Kleine K."/>
        </authorList>
    </citation>
    <scope>NUCLEOTIDE SEQUENCE [LARGE SCALE GENOMIC DNA]</scope>
    <source>
        <strain>ATCC 204508 / S288c</strain>
    </source>
</reference>
<reference key="2">
    <citation type="journal article" date="2014" name="G3 (Bethesda)">
        <title>The reference genome sequence of Saccharomyces cerevisiae: Then and now.</title>
        <authorList>
            <person name="Engel S.R."/>
            <person name="Dietrich F.S."/>
            <person name="Fisk D.G."/>
            <person name="Binkley G."/>
            <person name="Balakrishnan R."/>
            <person name="Costanzo M.C."/>
            <person name="Dwight S.S."/>
            <person name="Hitz B.C."/>
            <person name="Karra K."/>
            <person name="Nash R.S."/>
            <person name="Weng S."/>
            <person name="Wong E.D."/>
            <person name="Lloyd P."/>
            <person name="Skrzypek M.S."/>
            <person name="Miyasato S.R."/>
            <person name="Simison M."/>
            <person name="Cherry J.M."/>
        </authorList>
    </citation>
    <scope>GENOME REANNOTATION</scope>
    <source>
        <strain>ATCC 204508 / S288c</strain>
    </source>
</reference>
<reference key="3">
    <citation type="journal article" date="2001" name="EMBO J.">
        <title>Transcription of chromosomal rRNA genes by both RNA polymerase I and II in yeast uaf30 mutants lacking the 30 kDa subunit of transcription factor UAF.</title>
        <authorList>
            <person name="Siddiqi I.N."/>
            <person name="Dodd J.A."/>
            <person name="Vu L."/>
            <person name="Eliason K."/>
            <person name="Oakes M.L."/>
            <person name="Keener J."/>
            <person name="Moore R."/>
            <person name="Young M.K."/>
            <person name="Nomura M."/>
        </authorList>
    </citation>
    <scope>IDENTIFICATION IN THE UAF COMPLEX</scope>
</reference>
<reference key="4">
    <citation type="journal article" date="2003" name="Nature">
        <title>Global analysis of protein localization in budding yeast.</title>
        <authorList>
            <person name="Huh W.-K."/>
            <person name="Falvo J.V."/>
            <person name="Gerke L.C."/>
            <person name="Carroll A.S."/>
            <person name="Howson R.W."/>
            <person name="Weissman J.S."/>
            <person name="O'Shea E.K."/>
        </authorList>
    </citation>
    <scope>SUBCELLULAR LOCATION [LARGE SCALE ANALYSIS]</scope>
</reference>
<reference key="5">
    <citation type="journal article" date="2003" name="Nature">
        <title>Global analysis of protein expression in yeast.</title>
        <authorList>
            <person name="Ghaemmaghami S."/>
            <person name="Huh W.-K."/>
            <person name="Bower K."/>
            <person name="Howson R.W."/>
            <person name="Belle A."/>
            <person name="Dephoure N."/>
            <person name="O'Shea E.K."/>
            <person name="Weissman J.S."/>
        </authorList>
    </citation>
    <scope>LEVEL OF PROTEIN EXPRESSION [LARGE SCALE ANALYSIS]</scope>
</reference>
<reference key="6">
    <citation type="journal article" date="2007" name="J. Proteome Res.">
        <title>Large-scale phosphorylation analysis of alpha-factor-arrested Saccharomyces cerevisiae.</title>
        <authorList>
            <person name="Li X."/>
            <person name="Gerber S.A."/>
            <person name="Rudner A.D."/>
            <person name="Beausoleil S.A."/>
            <person name="Haas W."/>
            <person name="Villen J."/>
            <person name="Elias J.E."/>
            <person name="Gygi S.P."/>
        </authorList>
    </citation>
    <scope>PHOSPHORYLATION [LARGE SCALE ANALYSIS] AT SER-218; SER-220 AND SER-223</scope>
    <scope>IDENTIFICATION BY MASS SPECTROMETRY [LARGE SCALE ANALYSIS]</scope>
    <source>
        <strain>ADR376</strain>
    </source>
</reference>
<name>UAF30_YEAST</name>
<accession>Q08747</accession>
<accession>D6W2Z4</accession>
<comment type="function">
    <text>Nonessential component of the UAF (upstream activation factor) complex which interacts with the upstream element of the RNA polymerase I promoter and forms a stable preinitiation complex. Together with SPT15/TBP UAF seems to stimulate basal transcription to a fully activated level. UAF30 seems to play a role in silencing transcription by RNA polymerase II.</text>
</comment>
<comment type="subunit">
    <text evidence="4">Component of the UAF (upstream activation factor) complex which consists of UAF30, RRN5, RRN9, RRN10, and histones H3 and H4.</text>
</comment>
<comment type="subcellular location">
    <subcellularLocation>
        <location evidence="5">Nucleus</location>
        <location evidence="5">Nucleolus</location>
    </subcellularLocation>
</comment>
<comment type="miscellaneous">
    <text evidence="6">Present with 639 molecules/cell in log phase SD medium.</text>
</comment>
<dbReference type="EMBL" id="Z75203">
    <property type="protein sequence ID" value="CAA99523.1"/>
    <property type="molecule type" value="Genomic_DNA"/>
</dbReference>
<dbReference type="EMBL" id="BK006948">
    <property type="protein sequence ID" value="DAA11060.1"/>
    <property type="molecule type" value="Genomic_DNA"/>
</dbReference>
<dbReference type="PIR" id="S67199">
    <property type="entry name" value="S67199"/>
</dbReference>
<dbReference type="RefSeq" id="NP_014938.3">
    <property type="nucleotide sequence ID" value="NM_001183714.3"/>
</dbReference>
<dbReference type="PDB" id="7Z0O">
    <property type="method" value="EM"/>
    <property type="resolution" value="2.80 A"/>
    <property type="chains" value="G=1-228"/>
</dbReference>
<dbReference type="PDBsum" id="7Z0O"/>
<dbReference type="EMDB" id="EMD-14428"/>
<dbReference type="SMR" id="Q08747"/>
<dbReference type="BioGRID" id="34683">
    <property type="interactions" value="170"/>
</dbReference>
<dbReference type="ComplexPortal" id="CPX-1101">
    <property type="entry name" value="RNA polymerase I upstream activating factor complex"/>
</dbReference>
<dbReference type="FunCoup" id="Q08747">
    <property type="interactions" value="175"/>
</dbReference>
<dbReference type="IntAct" id="Q08747">
    <property type="interactions" value="7"/>
</dbReference>
<dbReference type="MINT" id="Q08747"/>
<dbReference type="STRING" id="4932.YOR295W"/>
<dbReference type="iPTMnet" id="Q08747"/>
<dbReference type="PaxDb" id="4932-YOR295W"/>
<dbReference type="PeptideAtlas" id="Q08747"/>
<dbReference type="EnsemblFungi" id="YOR295W_mRNA">
    <property type="protein sequence ID" value="YOR295W"/>
    <property type="gene ID" value="YOR295W"/>
</dbReference>
<dbReference type="GeneID" id="854470"/>
<dbReference type="KEGG" id="sce:YOR295W"/>
<dbReference type="AGR" id="SGD:S000005821"/>
<dbReference type="SGD" id="S000005821">
    <property type="gene designation" value="UAF30"/>
</dbReference>
<dbReference type="VEuPathDB" id="FungiDB:YOR295W"/>
<dbReference type="eggNOG" id="KOG1946">
    <property type="taxonomic scope" value="Eukaryota"/>
</dbReference>
<dbReference type="GeneTree" id="ENSGT00940000176588"/>
<dbReference type="HOGENOM" id="CLU_046065_1_0_1"/>
<dbReference type="InParanoid" id="Q08747"/>
<dbReference type="OMA" id="DKRTILC"/>
<dbReference type="OrthoDB" id="10251073at2759"/>
<dbReference type="BioCyc" id="YEAST:G3O-33780-MONOMER"/>
<dbReference type="BioGRID-ORCS" id="854470">
    <property type="hits" value="0 hits in 10 CRISPR screens"/>
</dbReference>
<dbReference type="PRO" id="PR:Q08747"/>
<dbReference type="Proteomes" id="UP000002311">
    <property type="component" value="Chromosome XV"/>
</dbReference>
<dbReference type="RNAct" id="Q08747">
    <property type="molecule type" value="protein"/>
</dbReference>
<dbReference type="GO" id="GO:0005730">
    <property type="term" value="C:nucleolus"/>
    <property type="evidence" value="ECO:0000314"/>
    <property type="project" value="SGD"/>
</dbReference>
<dbReference type="GO" id="GO:0005634">
    <property type="term" value="C:nucleus"/>
    <property type="evidence" value="ECO:0000318"/>
    <property type="project" value="GO_Central"/>
</dbReference>
<dbReference type="GO" id="GO:0000500">
    <property type="term" value="C:RNA polymerase I upstream activating factor complex"/>
    <property type="evidence" value="ECO:0000314"/>
    <property type="project" value="SGD"/>
</dbReference>
<dbReference type="GO" id="GO:0001165">
    <property type="term" value="F:RNA polymerase I cis-regulatory region sequence-specific DNA binding"/>
    <property type="evidence" value="ECO:0000314"/>
    <property type="project" value="SGD"/>
</dbReference>
<dbReference type="GO" id="GO:0001181">
    <property type="term" value="F:RNA polymerase I general transcription initiation factor activity"/>
    <property type="evidence" value="ECO:0000315"/>
    <property type="project" value="SGD"/>
</dbReference>
<dbReference type="GO" id="GO:0006325">
    <property type="term" value="P:chromatin organization"/>
    <property type="evidence" value="ECO:0000315"/>
    <property type="project" value="SGD"/>
</dbReference>
<dbReference type="GO" id="GO:0042790">
    <property type="term" value="P:nucleolar large rRNA transcription by RNA polymerase I"/>
    <property type="evidence" value="ECO:0000314"/>
    <property type="project" value="ComplexPortal"/>
</dbReference>
<dbReference type="GO" id="GO:0045943">
    <property type="term" value="P:positive regulation of transcription by RNA polymerase I"/>
    <property type="evidence" value="ECO:0000314"/>
    <property type="project" value="ComplexPortal"/>
</dbReference>
<dbReference type="GO" id="GO:0006361">
    <property type="term" value="P:transcription initiation at RNA polymerase I promoter"/>
    <property type="evidence" value="ECO:0000318"/>
    <property type="project" value="GO_Central"/>
</dbReference>
<dbReference type="CDD" id="cd10567">
    <property type="entry name" value="SWIB-MDM2_like"/>
    <property type="match status" value="1"/>
</dbReference>
<dbReference type="FunFam" id="1.10.245.10:FF:000004">
    <property type="entry name" value="Upstream activation factor subunit"/>
    <property type="match status" value="1"/>
</dbReference>
<dbReference type="Gene3D" id="1.10.10.60">
    <property type="entry name" value="Homeodomain-like"/>
    <property type="match status" value="1"/>
</dbReference>
<dbReference type="Gene3D" id="1.10.245.10">
    <property type="entry name" value="SWIB/MDM2 domain"/>
    <property type="match status" value="1"/>
</dbReference>
<dbReference type="InterPro" id="IPR014876">
    <property type="entry name" value="DEK_C"/>
</dbReference>
<dbReference type="InterPro" id="IPR019835">
    <property type="entry name" value="SWIB_domain"/>
</dbReference>
<dbReference type="InterPro" id="IPR036885">
    <property type="entry name" value="SWIB_MDM2_dom_sf"/>
</dbReference>
<dbReference type="InterPro" id="IPR003121">
    <property type="entry name" value="SWIB_MDM2_domain"/>
</dbReference>
<dbReference type="PANTHER" id="PTHR13844">
    <property type="entry name" value="SWI/SNF-RELATED MATRIX-ASSOCIATED ACTIN-DEPENDENT REGULATOR OF CHROMATIN SUBFAMILY D"/>
    <property type="match status" value="1"/>
</dbReference>
<dbReference type="Pfam" id="PF08766">
    <property type="entry name" value="DEK_C"/>
    <property type="match status" value="1"/>
</dbReference>
<dbReference type="Pfam" id="PF02201">
    <property type="entry name" value="SWIB"/>
    <property type="match status" value="1"/>
</dbReference>
<dbReference type="SMART" id="SM00151">
    <property type="entry name" value="SWIB"/>
    <property type="match status" value="1"/>
</dbReference>
<dbReference type="SUPFAM" id="SSF109715">
    <property type="entry name" value="DEK C-terminal domain"/>
    <property type="match status" value="1"/>
</dbReference>
<dbReference type="SUPFAM" id="SSF47592">
    <property type="entry name" value="SWIB/MDM2 domain"/>
    <property type="match status" value="1"/>
</dbReference>
<dbReference type="PROSITE" id="PS51998">
    <property type="entry name" value="DEK_C"/>
    <property type="match status" value="1"/>
</dbReference>
<dbReference type="PROSITE" id="PS51925">
    <property type="entry name" value="SWIB_MDM2"/>
    <property type="match status" value="1"/>
</dbReference>
<gene>
    <name type="primary">UAF30</name>
    <name type="ordered locus">YOR295W</name>
</gene>
<sequence>MAELNDYSTMIDILLSDMDLETVTTKKVRMALKEVYAIDVESQGKAINKLIRKHLDLVKERPRFERSLEDLLKENATLAIELTKEITVSKRSSGEEKNDSETKGTHVEKKKGTVSKSPISTRKVTLSKSLASLLGEHELTRTEVVRRLWAYIKAHNLQNPNNKKEILCDEKLELILGKSTNMFEMHKILASHMTEPKKISDCPPLIQEVRRKEKPIVSDSEQSDTKGI</sequence>
<keyword id="KW-0002">3D-structure</keyword>
<keyword id="KW-0539">Nucleus</keyword>
<keyword id="KW-0597">Phosphoprotein</keyword>
<keyword id="KW-1185">Reference proteome</keyword>
<keyword id="KW-0804">Transcription</keyword>
<keyword id="KW-0805">Transcription regulation</keyword>
<evidence type="ECO:0000255" key="1">
    <source>
        <dbReference type="PROSITE-ProRule" id="PRU01273"/>
    </source>
</evidence>
<evidence type="ECO:0000255" key="2">
    <source>
        <dbReference type="PROSITE-ProRule" id="PRU01342"/>
    </source>
</evidence>
<evidence type="ECO:0000256" key="3">
    <source>
        <dbReference type="SAM" id="MobiDB-lite"/>
    </source>
</evidence>
<evidence type="ECO:0000269" key="4">
    <source>
    </source>
</evidence>
<evidence type="ECO:0000269" key="5">
    <source>
    </source>
</evidence>
<evidence type="ECO:0000269" key="6">
    <source>
    </source>
</evidence>
<evidence type="ECO:0007744" key="7">
    <source>
    </source>
</evidence>
<evidence type="ECO:0007829" key="8">
    <source>
        <dbReference type="PDB" id="7Z0O"/>
    </source>
</evidence>
<organism>
    <name type="scientific">Saccharomyces cerevisiae (strain ATCC 204508 / S288c)</name>
    <name type="common">Baker's yeast</name>
    <dbReference type="NCBI Taxonomy" id="559292"/>
    <lineage>
        <taxon>Eukaryota</taxon>
        <taxon>Fungi</taxon>
        <taxon>Dikarya</taxon>
        <taxon>Ascomycota</taxon>
        <taxon>Saccharomycotina</taxon>
        <taxon>Saccharomycetes</taxon>
        <taxon>Saccharomycetales</taxon>
        <taxon>Saccharomycetaceae</taxon>
        <taxon>Saccharomyces</taxon>
    </lineage>
</organism>
<protein>
    <recommendedName>
        <fullName>Upstream activation factor subunit UAF30</fullName>
    </recommendedName>
    <alternativeName>
        <fullName>Upstream activation factor 30 KDa subunit</fullName>
        <shortName>p30</shortName>
    </alternativeName>
</protein>
<feature type="chain" id="PRO_0000245507" description="Upstream activation factor subunit UAF30">
    <location>
        <begin position="1"/>
        <end position="228"/>
    </location>
</feature>
<feature type="domain" description="DEK-C" evidence="2">
    <location>
        <begin position="1"/>
        <end position="56"/>
    </location>
</feature>
<feature type="domain" description="SWIB/MDM2" evidence="1">
    <location>
        <begin position="119"/>
        <end position="195"/>
    </location>
</feature>
<feature type="region of interest" description="Disordered" evidence="3">
    <location>
        <begin position="89"/>
        <end position="118"/>
    </location>
</feature>
<feature type="region of interest" description="Disordered" evidence="3">
    <location>
        <begin position="209"/>
        <end position="228"/>
    </location>
</feature>
<feature type="compositionally biased region" description="Basic and acidic residues" evidence="3">
    <location>
        <begin position="89"/>
        <end position="111"/>
    </location>
</feature>
<feature type="modified residue" description="Phosphoserine" evidence="7">
    <location>
        <position position="218"/>
    </location>
</feature>
<feature type="modified residue" description="Phosphoserine" evidence="7">
    <location>
        <position position="220"/>
    </location>
</feature>
<feature type="modified residue" description="Phosphoserine" evidence="7">
    <location>
        <position position="223"/>
    </location>
</feature>
<feature type="helix" evidence="8">
    <location>
        <begin position="4"/>
        <end position="15"/>
    </location>
</feature>
<feature type="strand" evidence="8">
    <location>
        <begin position="20"/>
        <end position="22"/>
    </location>
</feature>
<feature type="helix" evidence="8">
    <location>
        <begin position="25"/>
        <end position="36"/>
    </location>
</feature>
<feature type="helix" evidence="8">
    <location>
        <begin position="44"/>
        <end position="57"/>
    </location>
</feature>
<feature type="helix" evidence="8">
    <location>
        <begin position="68"/>
        <end position="85"/>
    </location>
</feature>
<proteinExistence type="evidence at protein level"/>